<reference key="1">
    <citation type="journal article" date="2000" name="Nature">
        <title>Genome sequence of the endocellular bacterial symbiont of aphids Buchnera sp. APS.</title>
        <authorList>
            <person name="Shigenobu S."/>
            <person name="Watanabe H."/>
            <person name="Hattori M."/>
            <person name="Sakaki Y."/>
            <person name="Ishikawa H."/>
        </authorList>
    </citation>
    <scope>NUCLEOTIDE SEQUENCE [LARGE SCALE GENOMIC DNA]</scope>
    <source>
        <strain>APS</strain>
    </source>
</reference>
<accession>P57613</accession>
<sequence length="135" mass="15379">MIVIAFDFGIKKIGVAVGENITKKGRPLSVLNAQNGCPNWQLVKNLIQYWQPQFIVVGLPLNINGTKQKITNKSEKFANLLKYKFNIVVKMHDERLTTVEAKSIIFKKNGFKGLKEEKIHSCAAVIILESWFNQY</sequence>
<gene>
    <name evidence="1" type="primary">yqgF</name>
    <name type="ordered locus">BU548</name>
</gene>
<proteinExistence type="inferred from homology"/>
<feature type="chain" id="PRO_0000172034" description="Putative pre-16S rRNA nuclease">
    <location>
        <begin position="1"/>
        <end position="135"/>
    </location>
</feature>
<name>YQGF_BUCAI</name>
<evidence type="ECO:0000255" key="1">
    <source>
        <dbReference type="HAMAP-Rule" id="MF_00651"/>
    </source>
</evidence>
<comment type="function">
    <text evidence="1">Could be a nuclease involved in processing of the 5'-end of pre-16S rRNA.</text>
</comment>
<comment type="subcellular location">
    <subcellularLocation>
        <location evidence="1">Cytoplasm</location>
    </subcellularLocation>
</comment>
<comment type="similarity">
    <text evidence="1">Belongs to the YqgF nuclease family.</text>
</comment>
<protein>
    <recommendedName>
        <fullName evidence="1">Putative pre-16S rRNA nuclease</fullName>
        <ecNumber evidence="1">3.1.-.-</ecNumber>
    </recommendedName>
</protein>
<organism>
    <name type="scientific">Buchnera aphidicola subsp. Acyrthosiphon pisum (strain APS)</name>
    <name type="common">Acyrthosiphon pisum symbiotic bacterium</name>
    <dbReference type="NCBI Taxonomy" id="107806"/>
    <lineage>
        <taxon>Bacteria</taxon>
        <taxon>Pseudomonadati</taxon>
        <taxon>Pseudomonadota</taxon>
        <taxon>Gammaproteobacteria</taxon>
        <taxon>Enterobacterales</taxon>
        <taxon>Erwiniaceae</taxon>
        <taxon>Buchnera</taxon>
    </lineage>
</organism>
<dbReference type="EC" id="3.1.-.-" evidence="1"/>
<dbReference type="EMBL" id="BA000003">
    <property type="protein sequence ID" value="BAB13240.1"/>
    <property type="molecule type" value="Genomic_DNA"/>
</dbReference>
<dbReference type="RefSeq" id="NP_240354.1">
    <property type="nucleotide sequence ID" value="NC_002528.1"/>
</dbReference>
<dbReference type="SMR" id="P57613"/>
<dbReference type="STRING" id="563178.BUAP5A_541"/>
<dbReference type="EnsemblBacteria" id="BAB13240">
    <property type="protein sequence ID" value="BAB13240"/>
    <property type="gene ID" value="BAB13240"/>
</dbReference>
<dbReference type="KEGG" id="buc:BU548"/>
<dbReference type="PATRIC" id="fig|107806.10.peg.552"/>
<dbReference type="eggNOG" id="COG0816">
    <property type="taxonomic scope" value="Bacteria"/>
</dbReference>
<dbReference type="HOGENOM" id="CLU_098240_3_0_6"/>
<dbReference type="Proteomes" id="UP000001806">
    <property type="component" value="Chromosome"/>
</dbReference>
<dbReference type="GO" id="GO:0005829">
    <property type="term" value="C:cytosol"/>
    <property type="evidence" value="ECO:0007669"/>
    <property type="project" value="TreeGrafter"/>
</dbReference>
<dbReference type="GO" id="GO:0004518">
    <property type="term" value="F:nuclease activity"/>
    <property type="evidence" value="ECO:0007669"/>
    <property type="project" value="UniProtKB-KW"/>
</dbReference>
<dbReference type="GO" id="GO:0000967">
    <property type="term" value="P:rRNA 5'-end processing"/>
    <property type="evidence" value="ECO:0007669"/>
    <property type="project" value="UniProtKB-UniRule"/>
</dbReference>
<dbReference type="CDD" id="cd16964">
    <property type="entry name" value="YqgF"/>
    <property type="match status" value="1"/>
</dbReference>
<dbReference type="Gene3D" id="3.30.420.140">
    <property type="entry name" value="YqgF/RNase H-like domain"/>
    <property type="match status" value="1"/>
</dbReference>
<dbReference type="HAMAP" id="MF_00651">
    <property type="entry name" value="Nuclease_YqgF"/>
    <property type="match status" value="1"/>
</dbReference>
<dbReference type="InterPro" id="IPR012337">
    <property type="entry name" value="RNaseH-like_sf"/>
</dbReference>
<dbReference type="InterPro" id="IPR005227">
    <property type="entry name" value="YqgF"/>
</dbReference>
<dbReference type="InterPro" id="IPR006641">
    <property type="entry name" value="YqgF/RNaseH-like_dom"/>
</dbReference>
<dbReference type="InterPro" id="IPR037027">
    <property type="entry name" value="YqgF/RNaseH-like_dom_sf"/>
</dbReference>
<dbReference type="NCBIfam" id="TIGR00250">
    <property type="entry name" value="RNAse_H_YqgF"/>
    <property type="match status" value="1"/>
</dbReference>
<dbReference type="PANTHER" id="PTHR33317">
    <property type="entry name" value="POLYNUCLEOTIDYL TRANSFERASE, RIBONUCLEASE H-LIKE SUPERFAMILY PROTEIN"/>
    <property type="match status" value="1"/>
</dbReference>
<dbReference type="PANTHER" id="PTHR33317:SF4">
    <property type="entry name" value="POLYNUCLEOTIDYL TRANSFERASE, RIBONUCLEASE H-LIKE SUPERFAMILY PROTEIN"/>
    <property type="match status" value="1"/>
</dbReference>
<dbReference type="Pfam" id="PF03652">
    <property type="entry name" value="RuvX"/>
    <property type="match status" value="1"/>
</dbReference>
<dbReference type="SMART" id="SM00732">
    <property type="entry name" value="YqgFc"/>
    <property type="match status" value="1"/>
</dbReference>
<dbReference type="SUPFAM" id="SSF53098">
    <property type="entry name" value="Ribonuclease H-like"/>
    <property type="match status" value="1"/>
</dbReference>
<keyword id="KW-0963">Cytoplasm</keyword>
<keyword id="KW-0378">Hydrolase</keyword>
<keyword id="KW-0540">Nuclease</keyword>
<keyword id="KW-1185">Reference proteome</keyword>
<keyword id="KW-0690">Ribosome biogenesis</keyword>